<keyword id="KW-0066">ATP synthesis</keyword>
<keyword id="KW-0997">Cell inner membrane</keyword>
<keyword id="KW-1003">Cell membrane</keyword>
<keyword id="KW-0139">CF(1)</keyword>
<keyword id="KW-0375">Hydrogen ion transport</keyword>
<keyword id="KW-0406">Ion transport</keyword>
<keyword id="KW-0472">Membrane</keyword>
<keyword id="KW-1185">Reference proteome</keyword>
<keyword id="KW-0813">Transport</keyword>
<feature type="chain" id="PRO_0000371021" description="ATP synthase subunit delta">
    <location>
        <begin position="1"/>
        <end position="184"/>
    </location>
</feature>
<reference key="1">
    <citation type="journal article" date="2009" name="Appl. Environ. Microbiol.">
        <title>Complete genome sequence of the chemolithoautotrophic marine magnetotactic coccus strain MC-1.</title>
        <authorList>
            <person name="Schubbe S."/>
            <person name="Williams T.J."/>
            <person name="Xie G."/>
            <person name="Kiss H.E."/>
            <person name="Brettin T.S."/>
            <person name="Martinez D."/>
            <person name="Ross C.A."/>
            <person name="Schuler D."/>
            <person name="Cox B.L."/>
            <person name="Nealson K.H."/>
            <person name="Bazylinski D.A."/>
        </authorList>
    </citation>
    <scope>NUCLEOTIDE SEQUENCE [LARGE SCALE GENOMIC DNA]</scope>
    <source>
        <strain>ATCC BAA-1437 / JCM 17883 / MC-1</strain>
    </source>
</reference>
<dbReference type="EMBL" id="CP000471">
    <property type="protein sequence ID" value="ABK45946.1"/>
    <property type="status" value="ALT_INIT"/>
    <property type="molecule type" value="Genomic_DNA"/>
</dbReference>
<dbReference type="RefSeq" id="WP_011715002.1">
    <property type="nucleotide sequence ID" value="NC_008576.1"/>
</dbReference>
<dbReference type="SMR" id="A0LDA3"/>
<dbReference type="STRING" id="156889.Mmc1_3461"/>
<dbReference type="KEGG" id="mgm:Mmc1_3461"/>
<dbReference type="eggNOG" id="COG0712">
    <property type="taxonomic scope" value="Bacteria"/>
</dbReference>
<dbReference type="HOGENOM" id="CLU_085114_4_1_5"/>
<dbReference type="OrthoDB" id="9796185at2"/>
<dbReference type="Proteomes" id="UP000002586">
    <property type="component" value="Chromosome"/>
</dbReference>
<dbReference type="GO" id="GO:0005886">
    <property type="term" value="C:plasma membrane"/>
    <property type="evidence" value="ECO:0007669"/>
    <property type="project" value="UniProtKB-SubCell"/>
</dbReference>
<dbReference type="GO" id="GO:0045259">
    <property type="term" value="C:proton-transporting ATP synthase complex"/>
    <property type="evidence" value="ECO:0007669"/>
    <property type="project" value="UniProtKB-KW"/>
</dbReference>
<dbReference type="GO" id="GO:0046933">
    <property type="term" value="F:proton-transporting ATP synthase activity, rotational mechanism"/>
    <property type="evidence" value="ECO:0007669"/>
    <property type="project" value="UniProtKB-UniRule"/>
</dbReference>
<dbReference type="Gene3D" id="1.10.520.20">
    <property type="entry name" value="N-terminal domain of the delta subunit of the F1F0-ATP synthase"/>
    <property type="match status" value="1"/>
</dbReference>
<dbReference type="HAMAP" id="MF_01416">
    <property type="entry name" value="ATP_synth_delta_bact"/>
    <property type="match status" value="1"/>
</dbReference>
<dbReference type="InterPro" id="IPR026015">
    <property type="entry name" value="ATP_synth_OSCP/delta_N_sf"/>
</dbReference>
<dbReference type="InterPro" id="IPR000711">
    <property type="entry name" value="ATPase_OSCP/dsu"/>
</dbReference>
<dbReference type="NCBIfam" id="TIGR01145">
    <property type="entry name" value="ATP_synt_delta"/>
    <property type="match status" value="1"/>
</dbReference>
<dbReference type="PANTHER" id="PTHR11910">
    <property type="entry name" value="ATP SYNTHASE DELTA CHAIN"/>
    <property type="match status" value="1"/>
</dbReference>
<dbReference type="Pfam" id="PF00213">
    <property type="entry name" value="OSCP"/>
    <property type="match status" value="1"/>
</dbReference>
<dbReference type="PRINTS" id="PR00125">
    <property type="entry name" value="ATPASEDELTA"/>
</dbReference>
<dbReference type="SUPFAM" id="SSF47928">
    <property type="entry name" value="N-terminal domain of the delta subunit of the F1F0-ATP synthase"/>
    <property type="match status" value="1"/>
</dbReference>
<sequence>MRTFAVHESTIAKRYATALAELASELNILDSIRDELAHFQALLAESPEMHEMMVSPTVSKESQHKLISTYLEYAKPNDLTANFLRLLIDKHRMALLNDVATAIVRVVDERAGRIQVKVETPKALTPSLVAKLEKSLADVTGKEVSLEISEKPELLGGLVIRMGSVMLDDSLRTQLHRLKEIMKG</sequence>
<organism>
    <name type="scientific">Magnetococcus marinus (strain ATCC BAA-1437 / JCM 17883 / MC-1)</name>
    <dbReference type="NCBI Taxonomy" id="156889"/>
    <lineage>
        <taxon>Bacteria</taxon>
        <taxon>Pseudomonadati</taxon>
        <taxon>Pseudomonadota</taxon>
        <taxon>Alphaproteobacteria</taxon>
        <taxon>Magnetococcales</taxon>
        <taxon>Magnetococcaceae</taxon>
        <taxon>Magnetococcus</taxon>
    </lineage>
</organism>
<protein>
    <recommendedName>
        <fullName evidence="1">ATP synthase subunit delta</fullName>
    </recommendedName>
    <alternativeName>
        <fullName evidence="1">ATP synthase F(1) sector subunit delta</fullName>
    </alternativeName>
    <alternativeName>
        <fullName evidence="1">F-type ATPase subunit delta</fullName>
        <shortName evidence="1">F-ATPase subunit delta</shortName>
    </alternativeName>
</protein>
<accession>A0LDA3</accession>
<comment type="function">
    <text evidence="1">F(1)F(0) ATP synthase produces ATP from ADP in the presence of a proton or sodium gradient. F-type ATPases consist of two structural domains, F(1) containing the extramembraneous catalytic core and F(0) containing the membrane proton channel, linked together by a central stalk and a peripheral stalk. During catalysis, ATP synthesis in the catalytic domain of F(1) is coupled via a rotary mechanism of the central stalk subunits to proton translocation.</text>
</comment>
<comment type="function">
    <text evidence="1">This protein is part of the stalk that links CF(0) to CF(1). It either transmits conformational changes from CF(0) to CF(1) or is implicated in proton conduction.</text>
</comment>
<comment type="subunit">
    <text evidence="1">F-type ATPases have 2 components, F(1) - the catalytic core - and F(0) - the membrane proton channel. F(1) has five subunits: alpha(3), beta(3), gamma(1), delta(1), epsilon(1). F(0) has three main subunits: a(1), b(2) and c(10-14). The alpha and beta chains form an alternating ring which encloses part of the gamma chain. F(1) is attached to F(0) by a central stalk formed by the gamma and epsilon chains, while a peripheral stalk is formed by the delta and b chains.</text>
</comment>
<comment type="subcellular location">
    <subcellularLocation>
        <location evidence="1">Cell inner membrane</location>
        <topology evidence="1">Peripheral membrane protein</topology>
    </subcellularLocation>
</comment>
<comment type="similarity">
    <text evidence="1">Belongs to the ATPase delta chain family.</text>
</comment>
<comment type="sequence caution" evidence="2">
    <conflict type="erroneous initiation">
        <sequence resource="EMBL-CDS" id="ABK45946"/>
    </conflict>
</comment>
<name>ATPD_MAGMM</name>
<gene>
    <name evidence="1" type="primary">atpH</name>
    <name type="ordered locus">Mmc1_3461</name>
</gene>
<evidence type="ECO:0000255" key="1">
    <source>
        <dbReference type="HAMAP-Rule" id="MF_01416"/>
    </source>
</evidence>
<evidence type="ECO:0000305" key="2"/>
<proteinExistence type="inferred from homology"/>